<gene>
    <name evidence="1" type="primary">prmC</name>
    <name type="synonym">hemK</name>
    <name type="ordered locus">PA4664</name>
</gene>
<accession>Q9HVC8</accession>
<dbReference type="EC" id="2.1.1.297" evidence="1"/>
<dbReference type="EMBL" id="AE004091">
    <property type="protein sequence ID" value="AAG08051.1"/>
    <property type="molecule type" value="Genomic_DNA"/>
</dbReference>
<dbReference type="PIR" id="A83063">
    <property type="entry name" value="A83063"/>
</dbReference>
<dbReference type="RefSeq" id="NP_253353.1">
    <property type="nucleotide sequence ID" value="NC_002516.2"/>
</dbReference>
<dbReference type="RefSeq" id="WP_003114694.1">
    <property type="nucleotide sequence ID" value="NZ_QZGE01000029.1"/>
</dbReference>
<dbReference type="SMR" id="Q9HVC8"/>
<dbReference type="FunCoup" id="Q9HVC8">
    <property type="interactions" value="570"/>
</dbReference>
<dbReference type="STRING" id="208964.PA4664"/>
<dbReference type="PaxDb" id="208964-PA4664"/>
<dbReference type="GeneID" id="881353"/>
<dbReference type="KEGG" id="pae:PA4664"/>
<dbReference type="PATRIC" id="fig|208964.12.peg.4886"/>
<dbReference type="PseudoCAP" id="PA4664"/>
<dbReference type="HOGENOM" id="CLU_018398_3_0_6"/>
<dbReference type="InParanoid" id="Q9HVC8"/>
<dbReference type="OrthoDB" id="9800643at2"/>
<dbReference type="PhylomeDB" id="Q9HVC8"/>
<dbReference type="BioCyc" id="PAER208964:G1FZ6-4760-MONOMER"/>
<dbReference type="Proteomes" id="UP000002438">
    <property type="component" value="Chromosome"/>
</dbReference>
<dbReference type="GO" id="GO:0003676">
    <property type="term" value="F:nucleic acid binding"/>
    <property type="evidence" value="ECO:0007669"/>
    <property type="project" value="InterPro"/>
</dbReference>
<dbReference type="GO" id="GO:0102559">
    <property type="term" value="F:protein-(glutamine-N5) methyltransferase activity"/>
    <property type="evidence" value="ECO:0007669"/>
    <property type="project" value="UniProtKB-EC"/>
</dbReference>
<dbReference type="GO" id="GO:0036009">
    <property type="term" value="F:protein-glutamine N-methyltransferase activity"/>
    <property type="evidence" value="ECO:0000318"/>
    <property type="project" value="GO_Central"/>
</dbReference>
<dbReference type="GO" id="GO:0032259">
    <property type="term" value="P:methylation"/>
    <property type="evidence" value="ECO:0007669"/>
    <property type="project" value="UniProtKB-KW"/>
</dbReference>
<dbReference type="GO" id="GO:0006415">
    <property type="term" value="P:translational termination"/>
    <property type="evidence" value="ECO:0000318"/>
    <property type="project" value="GO_Central"/>
</dbReference>
<dbReference type="CDD" id="cd02440">
    <property type="entry name" value="AdoMet_MTases"/>
    <property type="match status" value="1"/>
</dbReference>
<dbReference type="FunFam" id="1.10.8.10:FF:000141">
    <property type="entry name" value="Release factor glutamine methyltransferase"/>
    <property type="match status" value="1"/>
</dbReference>
<dbReference type="FunFam" id="3.40.50.150:FF:000053">
    <property type="entry name" value="Release factor glutamine methyltransferase"/>
    <property type="match status" value="1"/>
</dbReference>
<dbReference type="Gene3D" id="1.10.8.10">
    <property type="entry name" value="DNA helicase RuvA subunit, C-terminal domain"/>
    <property type="match status" value="1"/>
</dbReference>
<dbReference type="Gene3D" id="3.40.50.150">
    <property type="entry name" value="Vaccinia Virus protein VP39"/>
    <property type="match status" value="1"/>
</dbReference>
<dbReference type="HAMAP" id="MF_02126">
    <property type="entry name" value="RF_methyltr_PrmC"/>
    <property type="match status" value="1"/>
</dbReference>
<dbReference type="InterPro" id="IPR002052">
    <property type="entry name" value="DNA_methylase_N6_adenine_CS"/>
</dbReference>
<dbReference type="InterPro" id="IPR004556">
    <property type="entry name" value="HemK-like"/>
</dbReference>
<dbReference type="InterPro" id="IPR050320">
    <property type="entry name" value="N5-glutamine_MTase"/>
</dbReference>
<dbReference type="InterPro" id="IPR040758">
    <property type="entry name" value="PrmC_N"/>
</dbReference>
<dbReference type="InterPro" id="IPR019874">
    <property type="entry name" value="RF_methyltr_PrmC"/>
</dbReference>
<dbReference type="InterPro" id="IPR029063">
    <property type="entry name" value="SAM-dependent_MTases_sf"/>
</dbReference>
<dbReference type="InterPro" id="IPR007848">
    <property type="entry name" value="Small_mtfrase_dom"/>
</dbReference>
<dbReference type="NCBIfam" id="TIGR00536">
    <property type="entry name" value="hemK_fam"/>
    <property type="match status" value="1"/>
</dbReference>
<dbReference type="NCBIfam" id="TIGR03534">
    <property type="entry name" value="RF_mod_PrmC"/>
    <property type="match status" value="1"/>
</dbReference>
<dbReference type="PANTHER" id="PTHR18895">
    <property type="entry name" value="HEMK METHYLTRANSFERASE"/>
    <property type="match status" value="1"/>
</dbReference>
<dbReference type="PANTHER" id="PTHR18895:SF74">
    <property type="entry name" value="MTRF1L RELEASE FACTOR GLUTAMINE METHYLTRANSFERASE"/>
    <property type="match status" value="1"/>
</dbReference>
<dbReference type="Pfam" id="PF05175">
    <property type="entry name" value="MTS"/>
    <property type="match status" value="1"/>
</dbReference>
<dbReference type="Pfam" id="PF17827">
    <property type="entry name" value="PrmC_N"/>
    <property type="match status" value="1"/>
</dbReference>
<dbReference type="SUPFAM" id="SSF53335">
    <property type="entry name" value="S-adenosyl-L-methionine-dependent methyltransferases"/>
    <property type="match status" value="1"/>
</dbReference>
<feature type="chain" id="PRO_0000414536" description="Release factor glutamine methyltransferase">
    <location>
        <begin position="1"/>
        <end position="276"/>
    </location>
</feature>
<feature type="binding site" evidence="1">
    <location>
        <begin position="116"/>
        <end position="120"/>
    </location>
    <ligand>
        <name>S-adenosyl-L-methionine</name>
        <dbReference type="ChEBI" id="CHEBI:59789"/>
    </ligand>
</feature>
<feature type="binding site" evidence="1">
    <location>
        <position position="139"/>
    </location>
    <ligand>
        <name>S-adenosyl-L-methionine</name>
        <dbReference type="ChEBI" id="CHEBI:59789"/>
    </ligand>
</feature>
<feature type="binding site" evidence="1">
    <location>
        <position position="167"/>
    </location>
    <ligand>
        <name>S-adenosyl-L-methionine</name>
        <dbReference type="ChEBI" id="CHEBI:59789"/>
    </ligand>
</feature>
<feature type="binding site" evidence="1">
    <location>
        <begin position="182"/>
        <end position="185"/>
    </location>
    <ligand>
        <name>substrate</name>
    </ligand>
</feature>
<feature type="binding site" evidence="1">
    <location>
        <position position="182"/>
    </location>
    <ligand>
        <name>S-adenosyl-L-methionine</name>
        <dbReference type="ChEBI" id="CHEBI:59789"/>
    </ligand>
</feature>
<evidence type="ECO:0000255" key="1">
    <source>
        <dbReference type="HAMAP-Rule" id="MF_02126"/>
    </source>
</evidence>
<organism>
    <name type="scientific">Pseudomonas aeruginosa (strain ATCC 15692 / DSM 22644 / CIP 104116 / JCM 14847 / LMG 12228 / 1C / PRS 101 / PAO1)</name>
    <dbReference type="NCBI Taxonomy" id="208964"/>
    <lineage>
        <taxon>Bacteria</taxon>
        <taxon>Pseudomonadati</taxon>
        <taxon>Pseudomonadota</taxon>
        <taxon>Gammaproteobacteria</taxon>
        <taxon>Pseudomonadales</taxon>
        <taxon>Pseudomonadaceae</taxon>
        <taxon>Pseudomonas</taxon>
    </lineage>
</organism>
<protein>
    <recommendedName>
        <fullName evidence="1">Release factor glutamine methyltransferase</fullName>
        <shortName evidence="1">RF MTase</shortName>
        <ecNumber evidence="1">2.1.1.297</ecNumber>
    </recommendedName>
    <alternativeName>
        <fullName evidence="1">N5-glutamine methyltransferase PrmC</fullName>
    </alternativeName>
    <alternativeName>
        <fullName evidence="1">Protein-(glutamine-N5) MTase PrmC</fullName>
    </alternativeName>
    <alternativeName>
        <fullName evidence="1">Protein-glutamine N-methyltransferase PrmC</fullName>
    </alternativeName>
</protein>
<sequence>MTTICTLLKDSQLPDSPSARLDTELLLAAAMGKPRSFLRTWPERIVPREANERFDDWIARRRNGEPVAYILGHQGFWSLDLEVAPHTLIPRPDTELLVETALATLAADTATVLDLGTGTGAIALALASERPLWTVTAVDRVEEAVALAERNRQRLLLENVEVRRSHWFSALDGRRFRMIVGNPPYIPASDPHLSEGDVRFEPKSALVAGSDGLDDIRQIVAQAPRHLLDEGWLLLEHGYDQGAAVRELLGARGFAGVHTLRDLGGNERITLGQWAC</sequence>
<keyword id="KW-0489">Methyltransferase</keyword>
<keyword id="KW-1185">Reference proteome</keyword>
<keyword id="KW-0949">S-adenosyl-L-methionine</keyword>
<keyword id="KW-0808">Transferase</keyword>
<comment type="function">
    <text evidence="1">Methylates the class 1 translation termination release factors RF1/PrfA and RF2/PrfB on the glutamine residue of the universally conserved GGQ motif.</text>
</comment>
<comment type="catalytic activity">
    <reaction evidence="1">
        <text>L-glutaminyl-[peptide chain release factor] + S-adenosyl-L-methionine = N(5)-methyl-L-glutaminyl-[peptide chain release factor] + S-adenosyl-L-homocysteine + H(+)</text>
        <dbReference type="Rhea" id="RHEA:42896"/>
        <dbReference type="Rhea" id="RHEA-COMP:10271"/>
        <dbReference type="Rhea" id="RHEA-COMP:10272"/>
        <dbReference type="ChEBI" id="CHEBI:15378"/>
        <dbReference type="ChEBI" id="CHEBI:30011"/>
        <dbReference type="ChEBI" id="CHEBI:57856"/>
        <dbReference type="ChEBI" id="CHEBI:59789"/>
        <dbReference type="ChEBI" id="CHEBI:61891"/>
        <dbReference type="EC" id="2.1.1.297"/>
    </reaction>
</comment>
<comment type="similarity">
    <text evidence="1">Belongs to the protein N5-glutamine methyltransferase family. PrmC subfamily.</text>
</comment>
<proteinExistence type="inferred from homology"/>
<reference key="1">
    <citation type="journal article" date="2000" name="Nature">
        <title>Complete genome sequence of Pseudomonas aeruginosa PAO1, an opportunistic pathogen.</title>
        <authorList>
            <person name="Stover C.K."/>
            <person name="Pham X.-Q.T."/>
            <person name="Erwin A.L."/>
            <person name="Mizoguchi S.D."/>
            <person name="Warrener P."/>
            <person name="Hickey M.J."/>
            <person name="Brinkman F.S.L."/>
            <person name="Hufnagle W.O."/>
            <person name="Kowalik D.J."/>
            <person name="Lagrou M."/>
            <person name="Garber R.L."/>
            <person name="Goltry L."/>
            <person name="Tolentino E."/>
            <person name="Westbrock-Wadman S."/>
            <person name="Yuan Y."/>
            <person name="Brody L.L."/>
            <person name="Coulter S.N."/>
            <person name="Folger K.R."/>
            <person name="Kas A."/>
            <person name="Larbig K."/>
            <person name="Lim R.M."/>
            <person name="Smith K.A."/>
            <person name="Spencer D.H."/>
            <person name="Wong G.K.-S."/>
            <person name="Wu Z."/>
            <person name="Paulsen I.T."/>
            <person name="Reizer J."/>
            <person name="Saier M.H. Jr."/>
            <person name="Hancock R.E.W."/>
            <person name="Lory S."/>
            <person name="Olson M.V."/>
        </authorList>
    </citation>
    <scope>NUCLEOTIDE SEQUENCE [LARGE SCALE GENOMIC DNA]</scope>
    <source>
        <strain>ATCC 15692 / DSM 22644 / CIP 104116 / JCM 14847 / LMG 12228 / 1C / PRS 101 / PAO1</strain>
    </source>
</reference>
<name>PRMC_PSEAE</name>